<keyword id="KW-0067">ATP-binding</keyword>
<keyword id="KW-0143">Chaperone</keyword>
<keyword id="KW-0903">Direct protein sequencing</keyword>
<keyword id="KW-0496">Mitochondrion</keyword>
<keyword id="KW-0547">Nucleotide-binding</keyword>
<keyword id="KW-1185">Reference proteome</keyword>
<keyword id="KW-0346">Stress response</keyword>
<keyword id="KW-0809">Transit peptide</keyword>
<feature type="transit peptide" description="Mitochondrion">
    <location>
        <begin position="1"/>
        <end position="32"/>
    </location>
</feature>
<feature type="chain" id="PRO_0000005011" description="Chaperonin CPN60-1, mitochondrial">
    <location>
        <begin position="33"/>
        <end position="575"/>
    </location>
</feature>
<proteinExistence type="evidence at protein level"/>
<dbReference type="EMBL" id="X70867">
    <property type="protein sequence ID" value="CAA50217.1"/>
    <property type="molecule type" value="mRNA"/>
</dbReference>
<dbReference type="SMR" id="Q05045"/>
<dbReference type="OrthoDB" id="1733909at2759"/>
<dbReference type="Proteomes" id="UP000504608">
    <property type="component" value="Unplaced"/>
</dbReference>
<dbReference type="GO" id="GO:0005739">
    <property type="term" value="C:mitochondrion"/>
    <property type="evidence" value="ECO:0007669"/>
    <property type="project" value="UniProtKB-SubCell"/>
</dbReference>
<dbReference type="GO" id="GO:0005524">
    <property type="term" value="F:ATP binding"/>
    <property type="evidence" value="ECO:0007669"/>
    <property type="project" value="UniProtKB-KW"/>
</dbReference>
<dbReference type="GO" id="GO:0140662">
    <property type="term" value="F:ATP-dependent protein folding chaperone"/>
    <property type="evidence" value="ECO:0007669"/>
    <property type="project" value="InterPro"/>
</dbReference>
<dbReference type="GO" id="GO:0042026">
    <property type="term" value="P:protein refolding"/>
    <property type="evidence" value="ECO:0007669"/>
    <property type="project" value="InterPro"/>
</dbReference>
<dbReference type="CDD" id="cd03344">
    <property type="entry name" value="GroEL"/>
    <property type="match status" value="1"/>
</dbReference>
<dbReference type="FunFam" id="1.10.560.10:FF:000001">
    <property type="entry name" value="60 kDa chaperonin"/>
    <property type="match status" value="1"/>
</dbReference>
<dbReference type="FunFam" id="3.50.7.10:FF:000001">
    <property type="entry name" value="60 kDa chaperonin"/>
    <property type="match status" value="1"/>
</dbReference>
<dbReference type="Gene3D" id="3.50.7.10">
    <property type="entry name" value="GroEL"/>
    <property type="match status" value="1"/>
</dbReference>
<dbReference type="Gene3D" id="1.10.560.10">
    <property type="entry name" value="GroEL-like equatorial domain"/>
    <property type="match status" value="1"/>
</dbReference>
<dbReference type="Gene3D" id="3.30.260.10">
    <property type="entry name" value="TCP-1-like chaperonin intermediate domain"/>
    <property type="match status" value="1"/>
</dbReference>
<dbReference type="HAMAP" id="MF_00600">
    <property type="entry name" value="CH60"/>
    <property type="match status" value="1"/>
</dbReference>
<dbReference type="InterPro" id="IPR018370">
    <property type="entry name" value="Chaperonin_Cpn60_CS"/>
</dbReference>
<dbReference type="InterPro" id="IPR001844">
    <property type="entry name" value="Cpn60/GroEL"/>
</dbReference>
<dbReference type="InterPro" id="IPR002423">
    <property type="entry name" value="Cpn60/GroEL/TCP-1"/>
</dbReference>
<dbReference type="InterPro" id="IPR027409">
    <property type="entry name" value="GroEL-like_apical_dom_sf"/>
</dbReference>
<dbReference type="InterPro" id="IPR027413">
    <property type="entry name" value="GROEL-like_equatorial_sf"/>
</dbReference>
<dbReference type="InterPro" id="IPR027410">
    <property type="entry name" value="TCP-1-like_intermed_sf"/>
</dbReference>
<dbReference type="NCBIfam" id="TIGR02348">
    <property type="entry name" value="GroEL"/>
    <property type="match status" value="1"/>
</dbReference>
<dbReference type="NCBIfam" id="NF000592">
    <property type="entry name" value="PRK00013.1"/>
    <property type="match status" value="1"/>
</dbReference>
<dbReference type="NCBIfam" id="NF009487">
    <property type="entry name" value="PRK12849.1"/>
    <property type="match status" value="1"/>
</dbReference>
<dbReference type="NCBIfam" id="NF009488">
    <property type="entry name" value="PRK12850.1"/>
    <property type="match status" value="1"/>
</dbReference>
<dbReference type="NCBIfam" id="NF009489">
    <property type="entry name" value="PRK12851.1"/>
    <property type="match status" value="1"/>
</dbReference>
<dbReference type="PANTHER" id="PTHR45633">
    <property type="entry name" value="60 KDA HEAT SHOCK PROTEIN, MITOCHONDRIAL"/>
    <property type="match status" value="1"/>
</dbReference>
<dbReference type="Pfam" id="PF00118">
    <property type="entry name" value="Cpn60_TCP1"/>
    <property type="match status" value="1"/>
</dbReference>
<dbReference type="PRINTS" id="PR00298">
    <property type="entry name" value="CHAPERONIN60"/>
</dbReference>
<dbReference type="SUPFAM" id="SSF52029">
    <property type="entry name" value="GroEL apical domain-like"/>
    <property type="match status" value="1"/>
</dbReference>
<dbReference type="SUPFAM" id="SSF48592">
    <property type="entry name" value="GroEL equatorial domain-like"/>
    <property type="match status" value="1"/>
</dbReference>
<dbReference type="SUPFAM" id="SSF54849">
    <property type="entry name" value="GroEL-intermediate domain like"/>
    <property type="match status" value="1"/>
</dbReference>
<dbReference type="PROSITE" id="PS00296">
    <property type="entry name" value="CHAPERONINS_CPN60"/>
    <property type="match status" value="1"/>
</dbReference>
<comment type="function">
    <text>Implicated in mitochondrial protein import and macromolecular assembly. May facilitate the correct folding of imported proteins. May also prevent misfolding and promote the refolding and proper assembly of unfolded polypeptides generated under stress conditions in the mitochondrial matrix.</text>
</comment>
<comment type="subcellular location">
    <subcellularLocation>
        <location>Mitochondrion</location>
    </subcellularLocation>
</comment>
<comment type="induction">
    <text>By heat shock.</text>
</comment>
<comment type="similarity">
    <text evidence="1">Belongs to the chaperonin (HSP60) family.</text>
</comment>
<evidence type="ECO:0000305" key="1"/>
<accession>Q05045</accession>
<organism>
    <name type="scientific">Cucurbita maxima</name>
    <name type="common">Pumpkin</name>
    <name type="synonym">Winter squash</name>
    <dbReference type="NCBI Taxonomy" id="3661"/>
    <lineage>
        <taxon>Eukaryota</taxon>
        <taxon>Viridiplantae</taxon>
        <taxon>Streptophyta</taxon>
        <taxon>Embryophyta</taxon>
        <taxon>Tracheophyta</taxon>
        <taxon>Spermatophyta</taxon>
        <taxon>Magnoliopsida</taxon>
        <taxon>eudicotyledons</taxon>
        <taxon>Gunneridae</taxon>
        <taxon>Pentapetalae</taxon>
        <taxon>rosids</taxon>
        <taxon>fabids</taxon>
        <taxon>Cucurbitales</taxon>
        <taxon>Cucurbitaceae</taxon>
        <taxon>Cucurbiteae</taxon>
        <taxon>Cucurbita</taxon>
    </lineage>
</organism>
<gene>
    <name type="primary">CPN60-1</name>
</gene>
<sequence>MHRFATGLASKARLARNGANQIASRSNWRRNYAAKDVKFGVEARGLMLKGVEDLADAVKVTMGPKGRTVVIEQSFGAPKVTKDGVTVAKSIEFKDKVKNVGASLVKQVANATNDVAGDGTTCATILTKAIFTEGCKSVASGMNAMDLRRGISMAVDSVVTNLKSRARMISTSEEIAQVGTISANGEREIGELIAKAMEKVGKEGVITISDGKTMDNELEVVEGMKLDRGYISPYFITNQKNQKCELDDPLIIIYEKKISSINAVVKVLELALKKQRPLLIVSEDVESEALATLILNKLRAGIKVCAIKAPGFGENRKAGLQDLAVLTGGQVITEELGMNLEKVDLDMLGSCKKITISKDDTVILDGAGDKKAIEERCDQIRSGIEASTSDYDKEKLQERLAKLSGGVAVLKIGGASEAEVGEKKDRVTDALNATKAAVEEGIVPGGGVALLYASKELDKLPTANFDQKIGVQIIQNALKTPVHTIASNAGVEGAVVVGKLLEQDDPDLGYDAAKGEYVDMVKAGIIDPLKVIRTALVDAASVSSLMTTTEVVVVELPKDENEVPAMGGGMGGMDY</sequence>
<reference key="1">
    <citation type="journal article" date="1992" name="Eur. J. Biochem.">
        <title>Purification, cDNA cloning and Northern-blot analysis of mitochondrial chaperonin 60 from pumpkin cotyledons.</title>
        <authorList>
            <person name="Tsugeki R."/>
            <person name="Mori H."/>
            <person name="Nishimura M."/>
        </authorList>
    </citation>
    <scope>NUCLEOTIDE SEQUENCE [MRNA]</scope>
    <scope>PARTIAL PROTEIN SEQUENCE</scope>
    <source>
        <tissue>Cotyledon</tissue>
    </source>
</reference>
<protein>
    <recommendedName>
        <fullName>Chaperonin CPN60-1, mitochondrial</fullName>
    </recommendedName>
    <alternativeName>
        <fullName>HSP60-1</fullName>
    </alternativeName>
</protein>
<name>CH61_CUCMA</name>